<proteinExistence type="inferred from homology"/>
<gene>
    <name evidence="1" type="primary">rsxA</name>
    <name type="synonym">rnfA</name>
    <name type="ordered locus">SeSA_A1557</name>
</gene>
<organism>
    <name type="scientific">Salmonella schwarzengrund (strain CVM19633)</name>
    <dbReference type="NCBI Taxonomy" id="439843"/>
    <lineage>
        <taxon>Bacteria</taxon>
        <taxon>Pseudomonadati</taxon>
        <taxon>Pseudomonadota</taxon>
        <taxon>Gammaproteobacteria</taxon>
        <taxon>Enterobacterales</taxon>
        <taxon>Enterobacteriaceae</taxon>
        <taxon>Salmonella</taxon>
    </lineage>
</organism>
<reference key="1">
    <citation type="journal article" date="2011" name="J. Bacteriol.">
        <title>Comparative genomics of 28 Salmonella enterica isolates: evidence for CRISPR-mediated adaptive sublineage evolution.</title>
        <authorList>
            <person name="Fricke W.F."/>
            <person name="Mammel M.K."/>
            <person name="McDermott P.F."/>
            <person name="Tartera C."/>
            <person name="White D.G."/>
            <person name="Leclerc J.E."/>
            <person name="Ravel J."/>
            <person name="Cebula T.A."/>
        </authorList>
    </citation>
    <scope>NUCLEOTIDE SEQUENCE [LARGE SCALE GENOMIC DNA]</scope>
    <source>
        <strain>CVM19633</strain>
    </source>
</reference>
<name>RSXA_SALSV</name>
<protein>
    <recommendedName>
        <fullName evidence="1">Ion-translocating oxidoreductase complex subunit A</fullName>
        <ecNumber evidence="1">7.-.-.-</ecNumber>
    </recommendedName>
    <alternativeName>
        <fullName evidence="1">Rsx electron transport complex subunit A</fullName>
    </alternativeName>
</protein>
<accession>B4TV19</accession>
<sequence length="193" mass="20893">MTDYLLLFVGTVLVNNFVLVKFLGLCPFMGVSKKLETAMGMGLATTFVMTLASICAWLIDTWILIPLDLIYLRTLAFILVIAVVVQFTEMVVRKTSPALYRLLGIFLPLITTNCAVLGVALLNINLGHHFLQSALYGFSAAVGFSLVMVLFAAIRERLAVADVPAPFRGNAIALITAGLMSLAFMGFSGLVKL</sequence>
<dbReference type="EC" id="7.-.-.-" evidence="1"/>
<dbReference type="EMBL" id="CP001127">
    <property type="protein sequence ID" value="ACF92170.1"/>
    <property type="molecule type" value="Genomic_DNA"/>
</dbReference>
<dbReference type="RefSeq" id="WP_000133179.1">
    <property type="nucleotide sequence ID" value="NC_011094.1"/>
</dbReference>
<dbReference type="SMR" id="B4TV19"/>
<dbReference type="GeneID" id="66755900"/>
<dbReference type="KEGG" id="sew:SeSA_A1557"/>
<dbReference type="HOGENOM" id="CLU_095255_1_0_6"/>
<dbReference type="Proteomes" id="UP000001865">
    <property type="component" value="Chromosome"/>
</dbReference>
<dbReference type="GO" id="GO:0005886">
    <property type="term" value="C:plasma membrane"/>
    <property type="evidence" value="ECO:0007669"/>
    <property type="project" value="UniProtKB-SubCell"/>
</dbReference>
<dbReference type="GO" id="GO:0022900">
    <property type="term" value="P:electron transport chain"/>
    <property type="evidence" value="ECO:0007669"/>
    <property type="project" value="UniProtKB-UniRule"/>
</dbReference>
<dbReference type="HAMAP" id="MF_00459">
    <property type="entry name" value="RsxA_RnfA"/>
    <property type="match status" value="1"/>
</dbReference>
<dbReference type="InterPro" id="IPR011293">
    <property type="entry name" value="Ion_transpt_RnfA/RsxA"/>
</dbReference>
<dbReference type="InterPro" id="IPR003667">
    <property type="entry name" value="NqrDE/RnfAE"/>
</dbReference>
<dbReference type="InterPro" id="IPR050133">
    <property type="entry name" value="NqrDE/RnfAE_oxidrdctase"/>
</dbReference>
<dbReference type="NCBIfam" id="NF003481">
    <property type="entry name" value="PRK05151.1"/>
    <property type="match status" value="1"/>
</dbReference>
<dbReference type="NCBIfam" id="TIGR01943">
    <property type="entry name" value="rnfA"/>
    <property type="match status" value="1"/>
</dbReference>
<dbReference type="PANTHER" id="PTHR30335">
    <property type="entry name" value="INTEGRAL MEMBRANE PROTEIN OF SOXR-REDUCING COMPLEX"/>
    <property type="match status" value="1"/>
</dbReference>
<dbReference type="PANTHER" id="PTHR30335:SF0">
    <property type="entry name" value="ION-TRANSLOCATING OXIDOREDUCTASE COMPLEX SUBUNIT A"/>
    <property type="match status" value="1"/>
</dbReference>
<dbReference type="Pfam" id="PF02508">
    <property type="entry name" value="Rnf-Nqr"/>
    <property type="match status" value="1"/>
</dbReference>
<dbReference type="PIRSF" id="PIRSF006102">
    <property type="entry name" value="NQR_DE"/>
    <property type="match status" value="1"/>
</dbReference>
<comment type="function">
    <text evidence="1">Part of a membrane-bound complex that couples electron transfer with translocation of ions across the membrane. Required to maintain the reduced state of SoxR.</text>
</comment>
<comment type="subunit">
    <text evidence="1">The complex is composed of six subunits: RsxA, RsxB, RsxC, RsxD, RsxE and RsxG.</text>
</comment>
<comment type="subcellular location">
    <subcellularLocation>
        <location evidence="1">Cell inner membrane</location>
        <topology evidence="1">Multi-pass membrane protein</topology>
    </subcellularLocation>
</comment>
<comment type="similarity">
    <text evidence="1">Belongs to the NqrDE/RnfAE family.</text>
</comment>
<feature type="chain" id="PRO_1000191739" description="Ion-translocating oxidoreductase complex subunit A">
    <location>
        <begin position="1"/>
        <end position="193"/>
    </location>
</feature>
<feature type="transmembrane region" description="Helical" evidence="1">
    <location>
        <begin position="5"/>
        <end position="25"/>
    </location>
</feature>
<feature type="transmembrane region" description="Helical" evidence="1">
    <location>
        <begin position="47"/>
        <end position="67"/>
    </location>
</feature>
<feature type="transmembrane region" description="Helical" evidence="1">
    <location>
        <begin position="72"/>
        <end position="92"/>
    </location>
</feature>
<feature type="transmembrane region" description="Helical" evidence="1">
    <location>
        <begin position="102"/>
        <end position="122"/>
    </location>
</feature>
<feature type="transmembrane region" description="Helical" evidence="1">
    <location>
        <begin position="134"/>
        <end position="154"/>
    </location>
</feature>
<feature type="transmembrane region" description="Helical" evidence="1">
    <location>
        <begin position="171"/>
        <end position="191"/>
    </location>
</feature>
<keyword id="KW-0997">Cell inner membrane</keyword>
<keyword id="KW-1003">Cell membrane</keyword>
<keyword id="KW-0249">Electron transport</keyword>
<keyword id="KW-0472">Membrane</keyword>
<keyword id="KW-1278">Translocase</keyword>
<keyword id="KW-0812">Transmembrane</keyword>
<keyword id="KW-1133">Transmembrane helix</keyword>
<keyword id="KW-0813">Transport</keyword>
<evidence type="ECO:0000255" key="1">
    <source>
        <dbReference type="HAMAP-Rule" id="MF_00459"/>
    </source>
</evidence>